<reference key="1">
    <citation type="journal article" date="2007" name="PLoS Genet.">
        <title>Patterns and implications of gene gain and loss in the evolution of Prochlorococcus.</title>
        <authorList>
            <person name="Kettler G.C."/>
            <person name="Martiny A.C."/>
            <person name="Huang K."/>
            <person name="Zucker J."/>
            <person name="Coleman M.L."/>
            <person name="Rodrigue S."/>
            <person name="Chen F."/>
            <person name="Lapidus A."/>
            <person name="Ferriera S."/>
            <person name="Johnson J."/>
            <person name="Steglich C."/>
            <person name="Church G.M."/>
            <person name="Richardson P."/>
            <person name="Chisholm S.W."/>
        </authorList>
    </citation>
    <scope>NUCLEOTIDE SEQUENCE [LARGE SCALE GENOMIC DNA]</scope>
    <source>
        <strain>MIT 9215</strain>
    </source>
</reference>
<dbReference type="EMBL" id="CP000825">
    <property type="protein sequence ID" value="ABV51336.1"/>
    <property type="molecule type" value="Genomic_DNA"/>
</dbReference>
<dbReference type="RefSeq" id="WP_002805169.1">
    <property type="nucleotide sequence ID" value="NC_009840.1"/>
</dbReference>
<dbReference type="SMR" id="A8G6V5"/>
<dbReference type="STRING" id="93060.P9215_17231"/>
<dbReference type="GeneID" id="60201071"/>
<dbReference type="KEGG" id="pmh:P9215_17231"/>
<dbReference type="eggNOG" id="COG0636">
    <property type="taxonomic scope" value="Bacteria"/>
</dbReference>
<dbReference type="HOGENOM" id="CLU_148047_2_0_3"/>
<dbReference type="OrthoDB" id="9810379at2"/>
<dbReference type="Proteomes" id="UP000002014">
    <property type="component" value="Chromosome"/>
</dbReference>
<dbReference type="GO" id="GO:0031676">
    <property type="term" value="C:plasma membrane-derived thylakoid membrane"/>
    <property type="evidence" value="ECO:0007669"/>
    <property type="project" value="UniProtKB-SubCell"/>
</dbReference>
<dbReference type="GO" id="GO:0045259">
    <property type="term" value="C:proton-transporting ATP synthase complex"/>
    <property type="evidence" value="ECO:0007669"/>
    <property type="project" value="UniProtKB-KW"/>
</dbReference>
<dbReference type="GO" id="GO:0033177">
    <property type="term" value="C:proton-transporting two-sector ATPase complex, proton-transporting domain"/>
    <property type="evidence" value="ECO:0007669"/>
    <property type="project" value="InterPro"/>
</dbReference>
<dbReference type="GO" id="GO:0008289">
    <property type="term" value="F:lipid binding"/>
    <property type="evidence" value="ECO:0007669"/>
    <property type="project" value="UniProtKB-KW"/>
</dbReference>
<dbReference type="GO" id="GO:0046933">
    <property type="term" value="F:proton-transporting ATP synthase activity, rotational mechanism"/>
    <property type="evidence" value="ECO:0007669"/>
    <property type="project" value="UniProtKB-UniRule"/>
</dbReference>
<dbReference type="CDD" id="cd18183">
    <property type="entry name" value="ATP-synt_Fo_c_ATPH"/>
    <property type="match status" value="1"/>
</dbReference>
<dbReference type="FunFam" id="1.20.20.10:FF:000001">
    <property type="entry name" value="ATP synthase subunit c, chloroplastic"/>
    <property type="match status" value="1"/>
</dbReference>
<dbReference type="Gene3D" id="1.20.20.10">
    <property type="entry name" value="F1F0 ATP synthase subunit C"/>
    <property type="match status" value="1"/>
</dbReference>
<dbReference type="HAMAP" id="MF_01396">
    <property type="entry name" value="ATP_synth_c_bact"/>
    <property type="match status" value="1"/>
</dbReference>
<dbReference type="InterPro" id="IPR005953">
    <property type="entry name" value="ATP_synth_csu_bac/chlpt"/>
</dbReference>
<dbReference type="InterPro" id="IPR000454">
    <property type="entry name" value="ATP_synth_F0_csu"/>
</dbReference>
<dbReference type="InterPro" id="IPR020537">
    <property type="entry name" value="ATP_synth_F0_csu_DDCD_BS"/>
</dbReference>
<dbReference type="InterPro" id="IPR038662">
    <property type="entry name" value="ATP_synth_F0_csu_sf"/>
</dbReference>
<dbReference type="InterPro" id="IPR002379">
    <property type="entry name" value="ATPase_proteolipid_c-like_dom"/>
</dbReference>
<dbReference type="InterPro" id="IPR035921">
    <property type="entry name" value="F/V-ATP_Csub_sf"/>
</dbReference>
<dbReference type="NCBIfam" id="TIGR01260">
    <property type="entry name" value="ATP_synt_c"/>
    <property type="match status" value="1"/>
</dbReference>
<dbReference type="NCBIfam" id="NF005608">
    <property type="entry name" value="PRK07354.1"/>
    <property type="match status" value="1"/>
</dbReference>
<dbReference type="PANTHER" id="PTHR10031">
    <property type="entry name" value="ATP SYNTHASE LIPID-BINDING PROTEIN, MITOCHONDRIAL"/>
    <property type="match status" value="1"/>
</dbReference>
<dbReference type="PANTHER" id="PTHR10031:SF0">
    <property type="entry name" value="ATPASE PROTEIN 9"/>
    <property type="match status" value="1"/>
</dbReference>
<dbReference type="Pfam" id="PF00137">
    <property type="entry name" value="ATP-synt_C"/>
    <property type="match status" value="1"/>
</dbReference>
<dbReference type="PRINTS" id="PR00124">
    <property type="entry name" value="ATPASEC"/>
</dbReference>
<dbReference type="SUPFAM" id="SSF81333">
    <property type="entry name" value="F1F0 ATP synthase subunit C"/>
    <property type="match status" value="1"/>
</dbReference>
<dbReference type="PROSITE" id="PS00605">
    <property type="entry name" value="ATPASE_C"/>
    <property type="match status" value="1"/>
</dbReference>
<keyword id="KW-0066">ATP synthesis</keyword>
<keyword id="KW-0138">CF(0)</keyword>
<keyword id="KW-0375">Hydrogen ion transport</keyword>
<keyword id="KW-0406">Ion transport</keyword>
<keyword id="KW-0446">Lipid-binding</keyword>
<keyword id="KW-0472">Membrane</keyword>
<keyword id="KW-0793">Thylakoid</keyword>
<keyword id="KW-0812">Transmembrane</keyword>
<keyword id="KW-1133">Transmembrane helix</keyword>
<keyword id="KW-0813">Transport</keyword>
<feature type="chain" id="PRO_0000365913" description="ATP synthase subunit c">
    <location>
        <begin position="1"/>
        <end position="81"/>
    </location>
</feature>
<feature type="transmembrane region" description="Helical" evidence="1">
    <location>
        <begin position="7"/>
        <end position="27"/>
    </location>
</feature>
<feature type="transmembrane region" description="Helical" evidence="1">
    <location>
        <begin position="57"/>
        <end position="77"/>
    </location>
</feature>
<feature type="site" description="Reversibly protonated during proton transport" evidence="1">
    <location>
        <position position="61"/>
    </location>
</feature>
<name>ATPL_PROM2</name>
<sequence length="81" mass="8018">MDSITSAASVVAAGLAVGLGAIGPGLGQGNAAQGAVEGIARQPEAEGKIRGTLLLSFAFMESLTIYGLVVALVLLFANPFS</sequence>
<accession>A8G6V5</accession>
<proteinExistence type="inferred from homology"/>
<evidence type="ECO:0000255" key="1">
    <source>
        <dbReference type="HAMAP-Rule" id="MF_01396"/>
    </source>
</evidence>
<comment type="function">
    <text evidence="1">F(1)F(0) ATP synthase produces ATP from ADP in the presence of a proton or sodium gradient. F-type ATPases consist of two structural domains, F(1) containing the extramembraneous catalytic core and F(0) containing the membrane proton channel, linked together by a central stalk and a peripheral stalk. During catalysis, ATP synthesis in the catalytic domain of F(1) is coupled via a rotary mechanism of the central stalk subunits to proton translocation.</text>
</comment>
<comment type="function">
    <text evidence="1">Key component of the F(0) channel; it plays a direct role in translocation across the membrane. A homomeric c-ring of between 10-14 subunits forms the central stalk rotor element with the F(1) delta and epsilon subunits.</text>
</comment>
<comment type="subunit">
    <text evidence="1">F-type ATPases have 2 components, F(1) - the catalytic core - and F(0) - the membrane proton channel. F(1) has five subunits: alpha(3), beta(3), gamma(1), delta(1), epsilon(1). F(0) has four main subunits: a(1), b(1), b'(1) and c(10-14). The alpha and beta chains form an alternating ring which encloses part of the gamma chain. F(1) is attached to F(0) by a central stalk formed by the gamma and epsilon chains, while a peripheral stalk is formed by the delta, b and b' chains.</text>
</comment>
<comment type="subcellular location">
    <subcellularLocation>
        <location evidence="1">Cellular thylakoid membrane</location>
        <topology evidence="1">Multi-pass membrane protein</topology>
    </subcellularLocation>
</comment>
<comment type="similarity">
    <text evidence="1">Belongs to the ATPase C chain family.</text>
</comment>
<protein>
    <recommendedName>
        <fullName evidence="1">ATP synthase subunit c</fullName>
    </recommendedName>
    <alternativeName>
        <fullName evidence="1">ATP synthase F(0) sector subunit c</fullName>
    </alternativeName>
    <alternativeName>
        <fullName evidence="1">F-type ATPase subunit c</fullName>
        <shortName evidence="1">F-ATPase subunit c</shortName>
    </alternativeName>
    <alternativeName>
        <fullName evidence="1">Lipid-binding protein</fullName>
    </alternativeName>
</protein>
<gene>
    <name evidence="1" type="primary">atpE</name>
    <name evidence="1" type="synonym">atpH</name>
    <name type="ordered locus">P9215_17231</name>
</gene>
<organism>
    <name type="scientific">Prochlorococcus marinus (strain MIT 9215)</name>
    <dbReference type="NCBI Taxonomy" id="93060"/>
    <lineage>
        <taxon>Bacteria</taxon>
        <taxon>Bacillati</taxon>
        <taxon>Cyanobacteriota</taxon>
        <taxon>Cyanophyceae</taxon>
        <taxon>Synechococcales</taxon>
        <taxon>Prochlorococcaceae</taxon>
        <taxon>Prochlorococcus</taxon>
    </lineage>
</organism>